<sequence>MIALGVNIDHVATLRQARGTRYPDPVEAAFVAERAGADAITAHLREDRRHIVERDVEILSQTLRTRLNLEMAVEEGVLRVAERLSPSDCCLVPERRAELTTEGGLDVAGQLSRIKEACQRLAAAKVRVSLFVDPDPFQLEAAMETGAPVVELHTGRYANTADTATRAEELGQITSAASFADSLGLQVNAGHGLDYHNVQAVAAIPYIRELNIGHAIVAHAVFVGMATAVADMKRLMLEARG</sequence>
<name>PDXJ_ACIF5</name>
<feature type="chain" id="PRO_1000114799" description="Pyridoxine 5'-phosphate synthase">
    <location>
        <begin position="1"/>
        <end position="241"/>
    </location>
</feature>
<feature type="active site" description="Proton acceptor" evidence="1">
    <location>
        <position position="43"/>
    </location>
</feature>
<feature type="active site" description="Proton acceptor" evidence="1">
    <location>
        <position position="70"/>
    </location>
</feature>
<feature type="active site" description="Proton donor" evidence="1">
    <location>
        <position position="191"/>
    </location>
</feature>
<feature type="binding site" evidence="1">
    <location>
        <position position="7"/>
    </location>
    <ligand>
        <name>3-amino-2-oxopropyl phosphate</name>
        <dbReference type="ChEBI" id="CHEBI:57279"/>
    </ligand>
</feature>
<feature type="binding site" evidence="1">
    <location>
        <begin position="9"/>
        <end position="10"/>
    </location>
    <ligand>
        <name>1-deoxy-D-xylulose 5-phosphate</name>
        <dbReference type="ChEBI" id="CHEBI:57792"/>
    </ligand>
</feature>
<feature type="binding site" evidence="1">
    <location>
        <position position="18"/>
    </location>
    <ligand>
        <name>3-amino-2-oxopropyl phosphate</name>
        <dbReference type="ChEBI" id="CHEBI:57279"/>
    </ligand>
</feature>
<feature type="binding site" evidence="1">
    <location>
        <position position="45"/>
    </location>
    <ligand>
        <name>1-deoxy-D-xylulose 5-phosphate</name>
        <dbReference type="ChEBI" id="CHEBI:57792"/>
    </ligand>
</feature>
<feature type="binding site" evidence="1">
    <location>
        <position position="50"/>
    </location>
    <ligand>
        <name>1-deoxy-D-xylulose 5-phosphate</name>
        <dbReference type="ChEBI" id="CHEBI:57792"/>
    </ligand>
</feature>
<feature type="binding site" evidence="1">
    <location>
        <position position="100"/>
    </location>
    <ligand>
        <name>1-deoxy-D-xylulose 5-phosphate</name>
        <dbReference type="ChEBI" id="CHEBI:57792"/>
    </ligand>
</feature>
<feature type="binding site" evidence="1">
    <location>
        <position position="192"/>
    </location>
    <ligand>
        <name>3-amino-2-oxopropyl phosphate</name>
        <dbReference type="ChEBI" id="CHEBI:57279"/>
    </ligand>
</feature>
<feature type="binding site" evidence="1">
    <location>
        <begin position="213"/>
        <end position="214"/>
    </location>
    <ligand>
        <name>3-amino-2-oxopropyl phosphate</name>
        <dbReference type="ChEBI" id="CHEBI:57279"/>
    </ligand>
</feature>
<feature type="site" description="Transition state stabilizer" evidence="1">
    <location>
        <position position="151"/>
    </location>
</feature>
<evidence type="ECO:0000255" key="1">
    <source>
        <dbReference type="HAMAP-Rule" id="MF_00279"/>
    </source>
</evidence>
<comment type="function">
    <text evidence="1">Catalyzes the complicated ring closure reaction between the two acyclic compounds 1-deoxy-D-xylulose-5-phosphate (DXP) and 3-amino-2-oxopropyl phosphate (1-amino-acetone-3-phosphate or AAP) to form pyridoxine 5'-phosphate (PNP) and inorganic phosphate.</text>
</comment>
<comment type="catalytic activity">
    <reaction evidence="1">
        <text>3-amino-2-oxopropyl phosphate + 1-deoxy-D-xylulose 5-phosphate = pyridoxine 5'-phosphate + phosphate + 2 H2O + H(+)</text>
        <dbReference type="Rhea" id="RHEA:15265"/>
        <dbReference type="ChEBI" id="CHEBI:15377"/>
        <dbReference type="ChEBI" id="CHEBI:15378"/>
        <dbReference type="ChEBI" id="CHEBI:43474"/>
        <dbReference type="ChEBI" id="CHEBI:57279"/>
        <dbReference type="ChEBI" id="CHEBI:57792"/>
        <dbReference type="ChEBI" id="CHEBI:58589"/>
        <dbReference type="EC" id="2.6.99.2"/>
    </reaction>
</comment>
<comment type="pathway">
    <text evidence="1">Cofactor biosynthesis; pyridoxine 5'-phosphate biosynthesis; pyridoxine 5'-phosphate from D-erythrose 4-phosphate: step 5/5.</text>
</comment>
<comment type="subunit">
    <text evidence="1">Homooctamer; tetramer of dimers.</text>
</comment>
<comment type="subcellular location">
    <subcellularLocation>
        <location evidence="1">Cytoplasm</location>
    </subcellularLocation>
</comment>
<comment type="similarity">
    <text evidence="1">Belongs to the PNP synthase family.</text>
</comment>
<gene>
    <name evidence="1" type="primary">pdxJ</name>
    <name type="ordered locus">Lferr_1124</name>
</gene>
<proteinExistence type="inferred from homology"/>
<protein>
    <recommendedName>
        <fullName evidence="1">Pyridoxine 5'-phosphate synthase</fullName>
        <shortName evidence="1">PNP synthase</shortName>
        <ecNumber evidence="1">2.6.99.2</ecNumber>
    </recommendedName>
</protein>
<keyword id="KW-0963">Cytoplasm</keyword>
<keyword id="KW-0664">Pyridoxine biosynthesis</keyword>
<keyword id="KW-0808">Transferase</keyword>
<organism>
    <name type="scientific">Acidithiobacillus ferrooxidans (strain ATCC 53993 / BNL-5-31)</name>
    <name type="common">Leptospirillum ferrooxidans (ATCC 53993)</name>
    <dbReference type="NCBI Taxonomy" id="380394"/>
    <lineage>
        <taxon>Bacteria</taxon>
        <taxon>Pseudomonadati</taxon>
        <taxon>Pseudomonadota</taxon>
        <taxon>Acidithiobacillia</taxon>
        <taxon>Acidithiobacillales</taxon>
        <taxon>Acidithiobacillaceae</taxon>
        <taxon>Acidithiobacillus</taxon>
    </lineage>
</organism>
<reference key="1">
    <citation type="submission" date="2008-08" db="EMBL/GenBank/DDBJ databases">
        <title>Complete sequence of Acidithiobacillus ferrooxidans ATCC 53993.</title>
        <authorList>
            <person name="Lucas S."/>
            <person name="Copeland A."/>
            <person name="Lapidus A."/>
            <person name="Glavina del Rio T."/>
            <person name="Dalin E."/>
            <person name="Tice H."/>
            <person name="Bruce D."/>
            <person name="Goodwin L."/>
            <person name="Pitluck S."/>
            <person name="Sims D."/>
            <person name="Brettin T."/>
            <person name="Detter J.C."/>
            <person name="Han C."/>
            <person name="Kuske C.R."/>
            <person name="Larimer F."/>
            <person name="Land M."/>
            <person name="Hauser L."/>
            <person name="Kyrpides N."/>
            <person name="Lykidis A."/>
            <person name="Borole A.P."/>
        </authorList>
    </citation>
    <scope>NUCLEOTIDE SEQUENCE [LARGE SCALE GENOMIC DNA]</scope>
    <source>
        <strain>ATCC 53993 / BNL-5-31</strain>
    </source>
</reference>
<accession>B5EQL6</accession>
<dbReference type="EC" id="2.6.99.2" evidence="1"/>
<dbReference type="EMBL" id="CP001132">
    <property type="protein sequence ID" value="ACH83366.1"/>
    <property type="molecule type" value="Genomic_DNA"/>
</dbReference>
<dbReference type="RefSeq" id="WP_012536500.1">
    <property type="nucleotide sequence ID" value="NC_011206.1"/>
</dbReference>
<dbReference type="SMR" id="B5EQL6"/>
<dbReference type="GeneID" id="65280634"/>
<dbReference type="KEGG" id="afe:Lferr_1124"/>
<dbReference type="eggNOG" id="COG0854">
    <property type="taxonomic scope" value="Bacteria"/>
</dbReference>
<dbReference type="HOGENOM" id="CLU_074563_0_0_6"/>
<dbReference type="UniPathway" id="UPA00244">
    <property type="reaction ID" value="UER00313"/>
</dbReference>
<dbReference type="GO" id="GO:0005829">
    <property type="term" value="C:cytosol"/>
    <property type="evidence" value="ECO:0007669"/>
    <property type="project" value="TreeGrafter"/>
</dbReference>
<dbReference type="GO" id="GO:0033856">
    <property type="term" value="F:pyridoxine 5'-phosphate synthase activity"/>
    <property type="evidence" value="ECO:0007669"/>
    <property type="project" value="UniProtKB-EC"/>
</dbReference>
<dbReference type="GO" id="GO:0008615">
    <property type="term" value="P:pyridoxine biosynthetic process"/>
    <property type="evidence" value="ECO:0007669"/>
    <property type="project" value="UniProtKB-UniRule"/>
</dbReference>
<dbReference type="CDD" id="cd00003">
    <property type="entry name" value="PNPsynthase"/>
    <property type="match status" value="1"/>
</dbReference>
<dbReference type="FunFam" id="3.20.20.70:FF:000042">
    <property type="entry name" value="Pyridoxine 5'-phosphate synthase"/>
    <property type="match status" value="1"/>
</dbReference>
<dbReference type="Gene3D" id="3.20.20.70">
    <property type="entry name" value="Aldolase class I"/>
    <property type="match status" value="1"/>
</dbReference>
<dbReference type="HAMAP" id="MF_00279">
    <property type="entry name" value="PdxJ"/>
    <property type="match status" value="1"/>
</dbReference>
<dbReference type="InterPro" id="IPR013785">
    <property type="entry name" value="Aldolase_TIM"/>
</dbReference>
<dbReference type="InterPro" id="IPR004569">
    <property type="entry name" value="PyrdxlP_synth_PdxJ"/>
</dbReference>
<dbReference type="InterPro" id="IPR036130">
    <property type="entry name" value="Pyridoxine-5'_phos_synth"/>
</dbReference>
<dbReference type="NCBIfam" id="TIGR00559">
    <property type="entry name" value="pdxJ"/>
    <property type="match status" value="1"/>
</dbReference>
<dbReference type="NCBIfam" id="NF003623">
    <property type="entry name" value="PRK05265.1-1"/>
    <property type="match status" value="1"/>
</dbReference>
<dbReference type="NCBIfam" id="NF003625">
    <property type="entry name" value="PRK05265.1-3"/>
    <property type="match status" value="1"/>
</dbReference>
<dbReference type="NCBIfam" id="NF003627">
    <property type="entry name" value="PRK05265.1-5"/>
    <property type="match status" value="1"/>
</dbReference>
<dbReference type="PANTHER" id="PTHR30456">
    <property type="entry name" value="PYRIDOXINE 5'-PHOSPHATE SYNTHASE"/>
    <property type="match status" value="1"/>
</dbReference>
<dbReference type="PANTHER" id="PTHR30456:SF0">
    <property type="entry name" value="PYRIDOXINE 5'-PHOSPHATE SYNTHASE"/>
    <property type="match status" value="1"/>
</dbReference>
<dbReference type="Pfam" id="PF03740">
    <property type="entry name" value="PdxJ"/>
    <property type="match status" value="1"/>
</dbReference>
<dbReference type="SUPFAM" id="SSF63892">
    <property type="entry name" value="Pyridoxine 5'-phosphate synthase"/>
    <property type="match status" value="1"/>
</dbReference>